<keyword id="KW-0963">Cytoplasm</keyword>
<keyword id="KW-0274">FAD</keyword>
<keyword id="KW-0285">Flavoprotein</keyword>
<keyword id="KW-0520">NAD</keyword>
<keyword id="KW-1185">Reference proteome</keyword>
<keyword id="KW-0819">tRNA processing</keyword>
<evidence type="ECO:0000255" key="1">
    <source>
        <dbReference type="HAMAP-Rule" id="MF_00129"/>
    </source>
</evidence>
<comment type="function">
    <text evidence="1">NAD-binding protein involved in the addition of a carboxymethylaminomethyl (cmnm) group at the wobble position (U34) of certain tRNAs, forming tRNA-cmnm(5)s(2)U34.</text>
</comment>
<comment type="cofactor">
    <cofactor evidence="1">
        <name>FAD</name>
        <dbReference type="ChEBI" id="CHEBI:57692"/>
    </cofactor>
</comment>
<comment type="subunit">
    <text evidence="1">Homodimer. Heterotetramer of two MnmE and two MnmG subunits.</text>
</comment>
<comment type="subcellular location">
    <subcellularLocation>
        <location evidence="1">Cytoplasm</location>
    </subcellularLocation>
</comment>
<comment type="similarity">
    <text evidence="1">Belongs to the MnmG family.</text>
</comment>
<proteinExistence type="inferred from homology"/>
<reference key="1">
    <citation type="journal article" date="2011" name="Stand. Genomic Sci.">
        <title>Complete genome sequence of the halophilic and highly halotolerant Chromohalobacter salexigens type strain (1H11(T)).</title>
        <authorList>
            <person name="Copeland A."/>
            <person name="O'Connor K."/>
            <person name="Lucas S."/>
            <person name="Lapidus A."/>
            <person name="Berry K.W."/>
            <person name="Detter J.C."/>
            <person name="Del Rio T.G."/>
            <person name="Hammon N."/>
            <person name="Dalin E."/>
            <person name="Tice H."/>
            <person name="Pitluck S."/>
            <person name="Bruce D."/>
            <person name="Goodwin L."/>
            <person name="Han C."/>
            <person name="Tapia R."/>
            <person name="Saunders E."/>
            <person name="Schmutz J."/>
            <person name="Brettin T."/>
            <person name="Larimer F."/>
            <person name="Land M."/>
            <person name="Hauser L."/>
            <person name="Vargas C."/>
            <person name="Nieto J.J."/>
            <person name="Kyrpides N.C."/>
            <person name="Ivanova N."/>
            <person name="Goker M."/>
            <person name="Klenk H.P."/>
            <person name="Csonka L.N."/>
            <person name="Woyke T."/>
        </authorList>
    </citation>
    <scope>NUCLEOTIDE SEQUENCE [LARGE SCALE GENOMIC DNA]</scope>
    <source>
        <strain>ATCC BAA-138 / DSM 3043 / CIP 106854 / NCIMB 13768 / 1H11</strain>
    </source>
</reference>
<accession>Q1QSB9</accession>
<organism>
    <name type="scientific">Chromohalobacter salexigens (strain ATCC BAA-138 / DSM 3043 / CIP 106854 / NCIMB 13768 / 1H11)</name>
    <dbReference type="NCBI Taxonomy" id="290398"/>
    <lineage>
        <taxon>Bacteria</taxon>
        <taxon>Pseudomonadati</taxon>
        <taxon>Pseudomonadota</taxon>
        <taxon>Gammaproteobacteria</taxon>
        <taxon>Oceanospirillales</taxon>
        <taxon>Halomonadaceae</taxon>
        <taxon>Chromohalobacter</taxon>
    </lineage>
</organism>
<name>MNMG_CHRSD</name>
<feature type="chain" id="PRO_0000345256" description="tRNA uridine 5-carboxymethylaminomethyl modification enzyme MnmG">
    <location>
        <begin position="1"/>
        <end position="631"/>
    </location>
</feature>
<feature type="binding site" evidence="1">
    <location>
        <begin position="13"/>
        <end position="18"/>
    </location>
    <ligand>
        <name>FAD</name>
        <dbReference type="ChEBI" id="CHEBI:57692"/>
    </ligand>
</feature>
<feature type="binding site" evidence="1">
    <location>
        <begin position="273"/>
        <end position="287"/>
    </location>
    <ligand>
        <name>NAD(+)</name>
        <dbReference type="ChEBI" id="CHEBI:57540"/>
    </ligand>
</feature>
<sequence>MDYPDRFDVIVIGGGHAGTEAALAAARMGCQTLLLTHNIETLGQMSCNPAIGGIGKSHLVKEIDALGGAMAHATDLGGIQFRVLNARKGPAVRATRAQADRVRYKAAIRGMLENQPNLTLFQQAADDLIVENDTVRGVVTQTGIRVFGESVVLCTGTFLGGVIHIGLDHHAGGRAGDPPSNALAQRLRALPFHVDRLKTGTPPRLDAKSVDFSVLETQPGDDPTPVMSYLGRRDQHPRQVACHIAHTNARTHEIIHANLDRSPMYSGVIGGVGPRYCPSIEDKVNRFADKSSHQIFVEPEGLDTHELYPNGISTSLPFDVQFEVVRSIKGFENAHITRPGYAIEYDFFDPRDLKHSLETKFIHNLFFAGQINGTTGYEEAAAQGLLAGLNAARRAQGQDAWSPRRDEAYLGVLVDDLITMGTQEPYRMFTSRAEHRLLLREDNADLRLTEIGRELGLVDDTRWAHFSTKREAIARETERLRETWVQPSSELAKRLSGKLDKPLAREYRLADLLKRPELNHADLADDAPELDPAVAEQVQIQAKYQGYIARQQDEIDRLRRHEALRLPEDLDYARIDGLSHEIRQKLEAARPETLAQAGRISGVTPAAVSLLLVHLKKRRLIEDQDVQAVNA</sequence>
<protein>
    <recommendedName>
        <fullName evidence="1">tRNA uridine 5-carboxymethylaminomethyl modification enzyme MnmG</fullName>
    </recommendedName>
    <alternativeName>
        <fullName evidence="1">Glucose-inhibited division protein A</fullName>
    </alternativeName>
</protein>
<dbReference type="EMBL" id="CP000285">
    <property type="protein sequence ID" value="ABE60639.1"/>
    <property type="molecule type" value="Genomic_DNA"/>
</dbReference>
<dbReference type="RefSeq" id="WP_011508585.1">
    <property type="nucleotide sequence ID" value="NC_007963.1"/>
</dbReference>
<dbReference type="SMR" id="Q1QSB9"/>
<dbReference type="STRING" id="290398.Csal_3295"/>
<dbReference type="GeneID" id="95335986"/>
<dbReference type="KEGG" id="csa:Csal_3295"/>
<dbReference type="eggNOG" id="COG0445">
    <property type="taxonomic scope" value="Bacteria"/>
</dbReference>
<dbReference type="HOGENOM" id="CLU_007831_2_2_6"/>
<dbReference type="OrthoDB" id="9815560at2"/>
<dbReference type="Proteomes" id="UP000000239">
    <property type="component" value="Chromosome"/>
</dbReference>
<dbReference type="GO" id="GO:0005829">
    <property type="term" value="C:cytosol"/>
    <property type="evidence" value="ECO:0007669"/>
    <property type="project" value="TreeGrafter"/>
</dbReference>
<dbReference type="GO" id="GO:0050660">
    <property type="term" value="F:flavin adenine dinucleotide binding"/>
    <property type="evidence" value="ECO:0007669"/>
    <property type="project" value="UniProtKB-UniRule"/>
</dbReference>
<dbReference type="GO" id="GO:0030488">
    <property type="term" value="P:tRNA methylation"/>
    <property type="evidence" value="ECO:0007669"/>
    <property type="project" value="TreeGrafter"/>
</dbReference>
<dbReference type="GO" id="GO:0002098">
    <property type="term" value="P:tRNA wobble uridine modification"/>
    <property type="evidence" value="ECO:0007669"/>
    <property type="project" value="InterPro"/>
</dbReference>
<dbReference type="FunFam" id="1.10.10.1800:FF:000001">
    <property type="entry name" value="tRNA uridine 5-carboxymethylaminomethyl modification enzyme MnmG"/>
    <property type="match status" value="1"/>
</dbReference>
<dbReference type="FunFam" id="1.10.150.570:FF:000001">
    <property type="entry name" value="tRNA uridine 5-carboxymethylaminomethyl modification enzyme MnmG"/>
    <property type="match status" value="1"/>
</dbReference>
<dbReference type="FunFam" id="3.50.50.60:FF:000002">
    <property type="entry name" value="tRNA uridine 5-carboxymethylaminomethyl modification enzyme MnmG"/>
    <property type="match status" value="1"/>
</dbReference>
<dbReference type="FunFam" id="3.50.50.60:FF:000010">
    <property type="entry name" value="tRNA uridine 5-carboxymethylaminomethyl modification enzyme MnmG"/>
    <property type="match status" value="1"/>
</dbReference>
<dbReference type="Gene3D" id="3.50.50.60">
    <property type="entry name" value="FAD/NAD(P)-binding domain"/>
    <property type="match status" value="2"/>
</dbReference>
<dbReference type="Gene3D" id="1.10.150.570">
    <property type="entry name" value="GidA associated domain, C-terminal subdomain"/>
    <property type="match status" value="1"/>
</dbReference>
<dbReference type="Gene3D" id="1.10.10.1800">
    <property type="entry name" value="tRNA uridine 5-carboxymethylaminomethyl modification enzyme MnmG/GidA"/>
    <property type="match status" value="1"/>
</dbReference>
<dbReference type="HAMAP" id="MF_00129">
    <property type="entry name" value="MnmG_GidA"/>
    <property type="match status" value="1"/>
</dbReference>
<dbReference type="InterPro" id="IPR036188">
    <property type="entry name" value="FAD/NAD-bd_sf"/>
</dbReference>
<dbReference type="InterPro" id="IPR049312">
    <property type="entry name" value="GIDA_C_N"/>
</dbReference>
<dbReference type="InterPro" id="IPR004416">
    <property type="entry name" value="MnmG"/>
</dbReference>
<dbReference type="InterPro" id="IPR002218">
    <property type="entry name" value="MnmG-rel"/>
</dbReference>
<dbReference type="InterPro" id="IPR020595">
    <property type="entry name" value="MnmG-rel_CS"/>
</dbReference>
<dbReference type="InterPro" id="IPR026904">
    <property type="entry name" value="MnmG_C"/>
</dbReference>
<dbReference type="InterPro" id="IPR047001">
    <property type="entry name" value="MnmG_C_subdom"/>
</dbReference>
<dbReference type="InterPro" id="IPR044920">
    <property type="entry name" value="MnmG_C_subdom_sf"/>
</dbReference>
<dbReference type="InterPro" id="IPR040131">
    <property type="entry name" value="MnmG_N"/>
</dbReference>
<dbReference type="NCBIfam" id="TIGR00136">
    <property type="entry name" value="mnmG_gidA"/>
    <property type="match status" value="1"/>
</dbReference>
<dbReference type="PANTHER" id="PTHR11806">
    <property type="entry name" value="GLUCOSE INHIBITED DIVISION PROTEIN A"/>
    <property type="match status" value="1"/>
</dbReference>
<dbReference type="PANTHER" id="PTHR11806:SF0">
    <property type="entry name" value="PROTEIN MTO1 HOMOLOG, MITOCHONDRIAL"/>
    <property type="match status" value="1"/>
</dbReference>
<dbReference type="Pfam" id="PF01134">
    <property type="entry name" value="GIDA"/>
    <property type="match status" value="1"/>
</dbReference>
<dbReference type="Pfam" id="PF21680">
    <property type="entry name" value="GIDA_C_1st"/>
    <property type="match status" value="1"/>
</dbReference>
<dbReference type="Pfam" id="PF13932">
    <property type="entry name" value="SAM_GIDA_C"/>
    <property type="match status" value="1"/>
</dbReference>
<dbReference type="SMART" id="SM01228">
    <property type="entry name" value="GIDA_assoc_3"/>
    <property type="match status" value="1"/>
</dbReference>
<dbReference type="SUPFAM" id="SSF51905">
    <property type="entry name" value="FAD/NAD(P)-binding domain"/>
    <property type="match status" value="1"/>
</dbReference>
<dbReference type="PROSITE" id="PS01280">
    <property type="entry name" value="GIDA_1"/>
    <property type="match status" value="1"/>
</dbReference>
<dbReference type="PROSITE" id="PS01281">
    <property type="entry name" value="GIDA_2"/>
    <property type="match status" value="1"/>
</dbReference>
<gene>
    <name evidence="1" type="primary">mnmG</name>
    <name evidence="1" type="synonym">gidA</name>
    <name type="ordered locus">Csal_3295</name>
</gene>